<sequence length="120" mass="13599">MTTQLKDINGAYAKAKYIRMSPRKVRRVLDQIRGRSYREALIVLEFMPYRACEPVLKVLRSAVANAETNRGLDPVDLVVSHAYADQGPRLKRFRPRAQGRAYQIQKPTCHITIAVSAEAS</sequence>
<proteinExistence type="inferred from homology"/>
<accession>B0C1D8</accession>
<name>RL22_ACAM1</name>
<gene>
    <name evidence="1" type="primary">rplV</name>
    <name evidence="1" type="synonym">rpl22</name>
    <name type="ordered locus">AM1_4701</name>
</gene>
<protein>
    <recommendedName>
        <fullName evidence="1">Large ribosomal subunit protein uL22</fullName>
    </recommendedName>
    <alternativeName>
        <fullName evidence="2">50S ribosomal protein L22</fullName>
    </alternativeName>
</protein>
<comment type="function">
    <text evidence="1">This protein binds specifically to 23S rRNA; its binding is stimulated by other ribosomal proteins, e.g. L4, L17, and L20. It is important during the early stages of 50S assembly. It makes multiple contacts with different domains of the 23S rRNA in the assembled 50S subunit and ribosome (By similarity).</text>
</comment>
<comment type="function">
    <text evidence="1">The globular domain of the protein is located near the polypeptide exit tunnel on the outside of the subunit, while an extended beta-hairpin is found that lines the wall of the exit tunnel in the center of the 70S ribosome.</text>
</comment>
<comment type="subunit">
    <text evidence="1">Part of the 50S ribosomal subunit.</text>
</comment>
<comment type="similarity">
    <text evidence="1">Belongs to the universal ribosomal protein uL22 family.</text>
</comment>
<keyword id="KW-1185">Reference proteome</keyword>
<keyword id="KW-0687">Ribonucleoprotein</keyword>
<keyword id="KW-0689">Ribosomal protein</keyword>
<keyword id="KW-0694">RNA-binding</keyword>
<keyword id="KW-0699">rRNA-binding</keyword>
<reference key="1">
    <citation type="journal article" date="2008" name="Proc. Natl. Acad. Sci. U.S.A.">
        <title>Niche adaptation and genome expansion in the chlorophyll d-producing cyanobacterium Acaryochloris marina.</title>
        <authorList>
            <person name="Swingley W.D."/>
            <person name="Chen M."/>
            <person name="Cheung P.C."/>
            <person name="Conrad A.L."/>
            <person name="Dejesa L.C."/>
            <person name="Hao J."/>
            <person name="Honchak B.M."/>
            <person name="Karbach L.E."/>
            <person name="Kurdoglu A."/>
            <person name="Lahiri S."/>
            <person name="Mastrian S.D."/>
            <person name="Miyashita H."/>
            <person name="Page L."/>
            <person name="Ramakrishna P."/>
            <person name="Satoh S."/>
            <person name="Sattley W.M."/>
            <person name="Shimada Y."/>
            <person name="Taylor H.L."/>
            <person name="Tomo T."/>
            <person name="Tsuchiya T."/>
            <person name="Wang Z.T."/>
            <person name="Raymond J."/>
            <person name="Mimuro M."/>
            <person name="Blankenship R.E."/>
            <person name="Touchman J.W."/>
        </authorList>
    </citation>
    <scope>NUCLEOTIDE SEQUENCE [LARGE SCALE GENOMIC DNA]</scope>
    <source>
        <strain>MBIC 11017</strain>
    </source>
</reference>
<organism>
    <name type="scientific">Acaryochloris marina (strain MBIC 11017)</name>
    <dbReference type="NCBI Taxonomy" id="329726"/>
    <lineage>
        <taxon>Bacteria</taxon>
        <taxon>Bacillati</taxon>
        <taxon>Cyanobacteriota</taxon>
        <taxon>Cyanophyceae</taxon>
        <taxon>Acaryochloridales</taxon>
        <taxon>Acaryochloridaceae</taxon>
        <taxon>Acaryochloris</taxon>
    </lineage>
</organism>
<dbReference type="EMBL" id="CP000828">
    <property type="protein sequence ID" value="ABW29673.1"/>
    <property type="molecule type" value="Genomic_DNA"/>
</dbReference>
<dbReference type="RefSeq" id="WP_010469316.1">
    <property type="nucleotide sequence ID" value="NC_009925.1"/>
</dbReference>
<dbReference type="SMR" id="B0C1D8"/>
<dbReference type="STRING" id="329726.AM1_4701"/>
<dbReference type="KEGG" id="amr:AM1_4701"/>
<dbReference type="eggNOG" id="COG0091">
    <property type="taxonomic scope" value="Bacteria"/>
</dbReference>
<dbReference type="HOGENOM" id="CLU_083987_3_3_3"/>
<dbReference type="OrthoDB" id="9805969at2"/>
<dbReference type="Proteomes" id="UP000000268">
    <property type="component" value="Chromosome"/>
</dbReference>
<dbReference type="GO" id="GO:0022625">
    <property type="term" value="C:cytosolic large ribosomal subunit"/>
    <property type="evidence" value="ECO:0007669"/>
    <property type="project" value="TreeGrafter"/>
</dbReference>
<dbReference type="GO" id="GO:0019843">
    <property type="term" value="F:rRNA binding"/>
    <property type="evidence" value="ECO:0007669"/>
    <property type="project" value="UniProtKB-UniRule"/>
</dbReference>
<dbReference type="GO" id="GO:0003735">
    <property type="term" value="F:structural constituent of ribosome"/>
    <property type="evidence" value="ECO:0007669"/>
    <property type="project" value="InterPro"/>
</dbReference>
<dbReference type="GO" id="GO:0006412">
    <property type="term" value="P:translation"/>
    <property type="evidence" value="ECO:0007669"/>
    <property type="project" value="UniProtKB-UniRule"/>
</dbReference>
<dbReference type="CDD" id="cd00336">
    <property type="entry name" value="Ribosomal_L22"/>
    <property type="match status" value="1"/>
</dbReference>
<dbReference type="Gene3D" id="3.90.470.10">
    <property type="entry name" value="Ribosomal protein L22/L17"/>
    <property type="match status" value="1"/>
</dbReference>
<dbReference type="HAMAP" id="MF_01331_B">
    <property type="entry name" value="Ribosomal_uL22_B"/>
    <property type="match status" value="1"/>
</dbReference>
<dbReference type="InterPro" id="IPR001063">
    <property type="entry name" value="Ribosomal_uL22"/>
</dbReference>
<dbReference type="InterPro" id="IPR005727">
    <property type="entry name" value="Ribosomal_uL22_bac/chlpt-type"/>
</dbReference>
<dbReference type="InterPro" id="IPR047867">
    <property type="entry name" value="Ribosomal_uL22_bac/org-type"/>
</dbReference>
<dbReference type="InterPro" id="IPR018260">
    <property type="entry name" value="Ribosomal_uL22_CS"/>
</dbReference>
<dbReference type="InterPro" id="IPR036394">
    <property type="entry name" value="Ribosomal_uL22_sf"/>
</dbReference>
<dbReference type="NCBIfam" id="TIGR01044">
    <property type="entry name" value="rplV_bact"/>
    <property type="match status" value="1"/>
</dbReference>
<dbReference type="PANTHER" id="PTHR13501">
    <property type="entry name" value="CHLOROPLAST 50S RIBOSOMAL PROTEIN L22-RELATED"/>
    <property type="match status" value="1"/>
</dbReference>
<dbReference type="PANTHER" id="PTHR13501:SF8">
    <property type="entry name" value="LARGE RIBOSOMAL SUBUNIT PROTEIN UL22M"/>
    <property type="match status" value="1"/>
</dbReference>
<dbReference type="Pfam" id="PF00237">
    <property type="entry name" value="Ribosomal_L22"/>
    <property type="match status" value="1"/>
</dbReference>
<dbReference type="SUPFAM" id="SSF54843">
    <property type="entry name" value="Ribosomal protein L22"/>
    <property type="match status" value="1"/>
</dbReference>
<dbReference type="PROSITE" id="PS00464">
    <property type="entry name" value="RIBOSOMAL_L22"/>
    <property type="match status" value="1"/>
</dbReference>
<evidence type="ECO:0000255" key="1">
    <source>
        <dbReference type="HAMAP-Rule" id="MF_01331"/>
    </source>
</evidence>
<evidence type="ECO:0000305" key="2"/>
<feature type="chain" id="PRO_1000086543" description="Large ribosomal subunit protein uL22">
    <location>
        <begin position="1"/>
        <end position="120"/>
    </location>
</feature>